<keyword id="KW-0007">Acetylation</keyword>
<keyword id="KW-0903">Direct protein sequencing</keyword>
<keyword id="KW-0349">Heme</keyword>
<keyword id="KW-0408">Iron</keyword>
<keyword id="KW-0479">Metal-binding</keyword>
<keyword id="KW-0561">Oxygen transport</keyword>
<keyword id="KW-0597">Phosphoprotein</keyword>
<keyword id="KW-0813">Transport</keyword>
<evidence type="ECO:0000250" key="1">
    <source>
        <dbReference type="UniProtKB" id="P01942"/>
    </source>
</evidence>
<evidence type="ECO:0000250" key="2">
    <source>
        <dbReference type="UniProtKB" id="P01946"/>
    </source>
</evidence>
<evidence type="ECO:0000250" key="3">
    <source>
        <dbReference type="UniProtKB" id="P69905"/>
    </source>
</evidence>
<evidence type="ECO:0000255" key="4">
    <source>
        <dbReference type="PROSITE-ProRule" id="PRU00238"/>
    </source>
</evidence>
<comment type="function">
    <text>Involved in oxygen transport from the lung to the various peripheral tissues.</text>
</comment>
<comment type="function">
    <molecule>Hemopressin</molecule>
    <text evidence="2">Hemopressin acts as an antagonist peptide of the cannabinoid receptor CNR1. Hemopressin-binding efficiently blocks cannabinoid receptor CNR1 and subsequent signaling.</text>
</comment>
<comment type="subunit">
    <text>Heterotetramer of two alpha chains and two beta chains.</text>
</comment>
<comment type="tissue specificity">
    <text>Red blood cells.</text>
</comment>
<comment type="similarity">
    <text evidence="4">Belongs to the globin family.</text>
</comment>
<name>HBA_ELEMA</name>
<proteinExistence type="evidence at protein level"/>
<protein>
    <recommendedName>
        <fullName>Hemoglobin subunit alpha</fullName>
    </recommendedName>
    <alternativeName>
        <fullName>Alpha-globin</fullName>
    </alternativeName>
    <alternativeName>
        <fullName>Hemoglobin alpha chain</fullName>
    </alternativeName>
    <component>
        <recommendedName>
            <fullName evidence="2">Hemopressin</fullName>
        </recommendedName>
    </component>
</protein>
<gene>
    <name type="primary">HBA</name>
</gene>
<dbReference type="PIR" id="A02277">
    <property type="entry name" value="HAELI"/>
</dbReference>
<dbReference type="SMR" id="P01954"/>
<dbReference type="GO" id="GO:0072562">
    <property type="term" value="C:blood microparticle"/>
    <property type="evidence" value="ECO:0007669"/>
    <property type="project" value="TreeGrafter"/>
</dbReference>
<dbReference type="GO" id="GO:0031838">
    <property type="term" value="C:haptoglobin-hemoglobin complex"/>
    <property type="evidence" value="ECO:0007669"/>
    <property type="project" value="TreeGrafter"/>
</dbReference>
<dbReference type="GO" id="GO:0005833">
    <property type="term" value="C:hemoglobin complex"/>
    <property type="evidence" value="ECO:0007669"/>
    <property type="project" value="InterPro"/>
</dbReference>
<dbReference type="GO" id="GO:0031720">
    <property type="term" value="F:haptoglobin binding"/>
    <property type="evidence" value="ECO:0007669"/>
    <property type="project" value="TreeGrafter"/>
</dbReference>
<dbReference type="GO" id="GO:0020037">
    <property type="term" value="F:heme binding"/>
    <property type="evidence" value="ECO:0007669"/>
    <property type="project" value="InterPro"/>
</dbReference>
<dbReference type="GO" id="GO:0005506">
    <property type="term" value="F:iron ion binding"/>
    <property type="evidence" value="ECO:0007669"/>
    <property type="project" value="InterPro"/>
</dbReference>
<dbReference type="GO" id="GO:0043177">
    <property type="term" value="F:organic acid binding"/>
    <property type="evidence" value="ECO:0007669"/>
    <property type="project" value="TreeGrafter"/>
</dbReference>
<dbReference type="GO" id="GO:0019825">
    <property type="term" value="F:oxygen binding"/>
    <property type="evidence" value="ECO:0007669"/>
    <property type="project" value="InterPro"/>
</dbReference>
<dbReference type="GO" id="GO:0005344">
    <property type="term" value="F:oxygen carrier activity"/>
    <property type="evidence" value="ECO:0007669"/>
    <property type="project" value="UniProtKB-KW"/>
</dbReference>
<dbReference type="GO" id="GO:0004601">
    <property type="term" value="F:peroxidase activity"/>
    <property type="evidence" value="ECO:0007669"/>
    <property type="project" value="TreeGrafter"/>
</dbReference>
<dbReference type="GO" id="GO:0042744">
    <property type="term" value="P:hydrogen peroxide catabolic process"/>
    <property type="evidence" value="ECO:0007669"/>
    <property type="project" value="TreeGrafter"/>
</dbReference>
<dbReference type="CDD" id="cd08927">
    <property type="entry name" value="Hb-alpha-like"/>
    <property type="match status" value="1"/>
</dbReference>
<dbReference type="FunFam" id="1.10.490.10:FF:000002">
    <property type="entry name" value="Hemoglobin subunit alpha"/>
    <property type="match status" value="1"/>
</dbReference>
<dbReference type="Gene3D" id="1.10.490.10">
    <property type="entry name" value="Globins"/>
    <property type="match status" value="1"/>
</dbReference>
<dbReference type="InterPro" id="IPR000971">
    <property type="entry name" value="Globin"/>
</dbReference>
<dbReference type="InterPro" id="IPR009050">
    <property type="entry name" value="Globin-like_sf"/>
</dbReference>
<dbReference type="InterPro" id="IPR012292">
    <property type="entry name" value="Globin/Proto"/>
</dbReference>
<dbReference type="InterPro" id="IPR002338">
    <property type="entry name" value="Hemoglobin_a-typ"/>
</dbReference>
<dbReference type="InterPro" id="IPR050056">
    <property type="entry name" value="Hemoglobin_oxygen_transport"/>
</dbReference>
<dbReference type="InterPro" id="IPR002339">
    <property type="entry name" value="Hemoglobin_pi"/>
</dbReference>
<dbReference type="PANTHER" id="PTHR11442">
    <property type="entry name" value="HEMOGLOBIN FAMILY MEMBER"/>
    <property type="match status" value="1"/>
</dbReference>
<dbReference type="PANTHER" id="PTHR11442:SF48">
    <property type="entry name" value="HEMOGLOBIN SUBUNIT ALPHA"/>
    <property type="match status" value="1"/>
</dbReference>
<dbReference type="Pfam" id="PF00042">
    <property type="entry name" value="Globin"/>
    <property type="match status" value="1"/>
</dbReference>
<dbReference type="PRINTS" id="PR00612">
    <property type="entry name" value="ALPHAHAEM"/>
</dbReference>
<dbReference type="PRINTS" id="PR00815">
    <property type="entry name" value="PIHAEM"/>
</dbReference>
<dbReference type="SUPFAM" id="SSF46458">
    <property type="entry name" value="Globin-like"/>
    <property type="match status" value="1"/>
</dbReference>
<dbReference type="PROSITE" id="PS01033">
    <property type="entry name" value="GLOBIN"/>
    <property type="match status" value="1"/>
</dbReference>
<feature type="chain" id="PRO_0000052623" description="Hemoglobin subunit alpha">
    <location>
        <begin position="1"/>
        <end position="141"/>
    </location>
</feature>
<feature type="peptide" id="PRO_0000455868" description="Hemopressin" evidence="2">
    <location>
        <begin position="95"/>
        <end position="103"/>
    </location>
</feature>
<feature type="domain" description="Globin" evidence="4">
    <location>
        <begin position="1"/>
        <end position="141"/>
    </location>
</feature>
<feature type="binding site" evidence="4">
    <location>
        <position position="58"/>
    </location>
    <ligand>
        <name>O2</name>
        <dbReference type="ChEBI" id="CHEBI:15379"/>
    </ligand>
</feature>
<feature type="binding site" description="proximal binding residue" evidence="4">
    <location>
        <position position="87"/>
    </location>
    <ligand>
        <name>heme b</name>
        <dbReference type="ChEBI" id="CHEBI:60344"/>
    </ligand>
    <ligandPart>
        <name>Fe</name>
        <dbReference type="ChEBI" id="CHEBI:18248"/>
    </ligandPart>
</feature>
<feature type="modified residue" description="Phosphoserine" evidence="3">
    <location>
        <position position="3"/>
    </location>
</feature>
<feature type="modified residue" description="N6-succinyllysine" evidence="1">
    <location>
        <position position="7"/>
    </location>
</feature>
<feature type="modified residue" description="Phosphothreonine" evidence="3">
    <location>
        <position position="8"/>
    </location>
</feature>
<feature type="modified residue" description="N6-succinyllysine" evidence="1">
    <location>
        <position position="11"/>
    </location>
</feature>
<feature type="modified residue" description="N6-acetyllysine; alternate" evidence="3">
    <location>
        <position position="16"/>
    </location>
</feature>
<feature type="modified residue" description="N6-succinyllysine; alternate" evidence="1">
    <location>
        <position position="16"/>
    </location>
</feature>
<feature type="modified residue" description="Phosphotyrosine" evidence="3">
    <location>
        <position position="24"/>
    </location>
</feature>
<feature type="modified residue" description="Phosphoserine" evidence="3">
    <location>
        <position position="35"/>
    </location>
</feature>
<feature type="modified residue" description="N6-succinyllysine" evidence="1">
    <location>
        <position position="40"/>
    </location>
</feature>
<feature type="modified residue" description="Phosphoserine" evidence="3">
    <location>
        <position position="49"/>
    </location>
</feature>
<feature type="modified residue" description="Phosphoserine" evidence="1">
    <location>
        <position position="102"/>
    </location>
</feature>
<feature type="modified residue" description="Phosphothreonine" evidence="1">
    <location>
        <position position="108"/>
    </location>
</feature>
<feature type="modified residue" description="Phosphoserine" evidence="1">
    <location>
        <position position="124"/>
    </location>
</feature>
<feature type="modified residue" description="Phosphothreonine" evidence="1">
    <location>
        <position position="134"/>
    </location>
</feature>
<feature type="modified residue" description="Phosphothreonine" evidence="1">
    <location>
        <position position="137"/>
    </location>
</feature>
<feature type="modified residue" description="Phosphoserine" evidence="1">
    <location>
        <position position="138"/>
    </location>
</feature>
<organism>
    <name type="scientific">Elephas maximus</name>
    <name type="common">Indian elephant</name>
    <dbReference type="NCBI Taxonomy" id="9783"/>
    <lineage>
        <taxon>Eukaryota</taxon>
        <taxon>Metazoa</taxon>
        <taxon>Chordata</taxon>
        <taxon>Craniata</taxon>
        <taxon>Vertebrata</taxon>
        <taxon>Euteleostomi</taxon>
        <taxon>Mammalia</taxon>
        <taxon>Eutheria</taxon>
        <taxon>Afrotheria</taxon>
        <taxon>Proboscidea</taxon>
        <taxon>Elephantidae</taxon>
        <taxon>Elephas</taxon>
    </lineage>
</organism>
<accession>P01954</accession>
<reference key="1">
    <citation type="journal article" date="1982" name="Hoppe-Seyler's Z. Physiol. Chem.">
        <title>Hemoglobins, XLVIII. The primary structure of hemoglobin of the Indian elephant (Elephas maximus, Proboscidea): beta 2 = Asn.</title>
        <authorList>
            <person name="Braunitzer G."/>
            <person name="Jelkmann W."/>
            <person name="Stangl A."/>
            <person name="Schrank B."/>
            <person name="Krombach C."/>
        </authorList>
    </citation>
    <scope>PROTEIN SEQUENCE</scope>
</reference>
<sequence>VLSDKDKTNVKATWSKVGDHASDYVAEALERMFFSFPTTKTYFPHFDLSHGSGQVKGHGKKVGEALTQAVGHLDDLPSALSALSDLHAHKLRVDPVNFKLLSHCLLVTLSSHQPTEFTPEVHASLDKFLSNVSTVLTSKYR</sequence>